<dbReference type="EC" id="3.5.1.5" evidence="1"/>
<dbReference type="EMBL" id="CP000241">
    <property type="protein sequence ID" value="ABF84140.1"/>
    <property type="molecule type" value="Genomic_DNA"/>
</dbReference>
<dbReference type="RefSeq" id="WP_000724277.1">
    <property type="nucleotide sequence ID" value="NC_008086.1"/>
</dbReference>
<dbReference type="SMR" id="Q1CV82"/>
<dbReference type="MEROPS" id="M38.982"/>
<dbReference type="KEGG" id="hpa:HPAG1_0073"/>
<dbReference type="HOGENOM" id="CLU_000980_2_0_7"/>
<dbReference type="UniPathway" id="UPA00258">
    <property type="reaction ID" value="UER00370"/>
</dbReference>
<dbReference type="GO" id="GO:0005737">
    <property type="term" value="C:cytoplasm"/>
    <property type="evidence" value="ECO:0007669"/>
    <property type="project" value="UniProtKB-SubCell"/>
</dbReference>
<dbReference type="GO" id="GO:0016151">
    <property type="term" value="F:nickel cation binding"/>
    <property type="evidence" value="ECO:0007669"/>
    <property type="project" value="UniProtKB-UniRule"/>
</dbReference>
<dbReference type="GO" id="GO:0009039">
    <property type="term" value="F:urease activity"/>
    <property type="evidence" value="ECO:0007669"/>
    <property type="project" value="UniProtKB-UniRule"/>
</dbReference>
<dbReference type="GO" id="GO:0043419">
    <property type="term" value="P:urea catabolic process"/>
    <property type="evidence" value="ECO:0007669"/>
    <property type="project" value="UniProtKB-UniRule"/>
</dbReference>
<dbReference type="CDD" id="cd00375">
    <property type="entry name" value="Urease_alpha"/>
    <property type="match status" value="1"/>
</dbReference>
<dbReference type="Gene3D" id="3.20.20.140">
    <property type="entry name" value="Metal-dependent hydrolases"/>
    <property type="match status" value="1"/>
</dbReference>
<dbReference type="Gene3D" id="2.30.40.10">
    <property type="entry name" value="Urease, subunit C, domain 1"/>
    <property type="match status" value="1"/>
</dbReference>
<dbReference type="HAMAP" id="MF_01953">
    <property type="entry name" value="Urease_alpha"/>
    <property type="match status" value="1"/>
</dbReference>
<dbReference type="InterPro" id="IPR006680">
    <property type="entry name" value="Amidohydro-rel"/>
</dbReference>
<dbReference type="InterPro" id="IPR011059">
    <property type="entry name" value="Metal-dep_hydrolase_composite"/>
</dbReference>
<dbReference type="InterPro" id="IPR032466">
    <property type="entry name" value="Metal_Hydrolase"/>
</dbReference>
<dbReference type="InterPro" id="IPR011612">
    <property type="entry name" value="Urease_alpha_N_dom"/>
</dbReference>
<dbReference type="InterPro" id="IPR050112">
    <property type="entry name" value="Urease_alpha_subunit"/>
</dbReference>
<dbReference type="InterPro" id="IPR017950">
    <property type="entry name" value="Urease_AS"/>
</dbReference>
<dbReference type="InterPro" id="IPR005848">
    <property type="entry name" value="Urease_asu"/>
</dbReference>
<dbReference type="InterPro" id="IPR017951">
    <property type="entry name" value="Urease_asu_c"/>
</dbReference>
<dbReference type="InterPro" id="IPR029754">
    <property type="entry name" value="Urease_Ni-bd"/>
</dbReference>
<dbReference type="NCBIfam" id="NF009686">
    <property type="entry name" value="PRK13207.1"/>
    <property type="match status" value="1"/>
</dbReference>
<dbReference type="NCBIfam" id="NF010591">
    <property type="entry name" value="PRK13985.1"/>
    <property type="match status" value="1"/>
</dbReference>
<dbReference type="NCBIfam" id="TIGR01792">
    <property type="entry name" value="urease_alph"/>
    <property type="match status" value="1"/>
</dbReference>
<dbReference type="PANTHER" id="PTHR43440">
    <property type="entry name" value="UREASE"/>
    <property type="match status" value="1"/>
</dbReference>
<dbReference type="PANTHER" id="PTHR43440:SF1">
    <property type="entry name" value="UREASE"/>
    <property type="match status" value="1"/>
</dbReference>
<dbReference type="Pfam" id="PF01979">
    <property type="entry name" value="Amidohydro_1"/>
    <property type="match status" value="1"/>
</dbReference>
<dbReference type="Pfam" id="PF00449">
    <property type="entry name" value="Urease_alpha"/>
    <property type="match status" value="1"/>
</dbReference>
<dbReference type="PRINTS" id="PR01752">
    <property type="entry name" value="UREASE"/>
</dbReference>
<dbReference type="SUPFAM" id="SSF51338">
    <property type="entry name" value="Composite domain of metallo-dependent hydrolases"/>
    <property type="match status" value="2"/>
</dbReference>
<dbReference type="SUPFAM" id="SSF51556">
    <property type="entry name" value="Metallo-dependent hydrolases"/>
    <property type="match status" value="1"/>
</dbReference>
<dbReference type="PROSITE" id="PS01120">
    <property type="entry name" value="UREASE_1"/>
    <property type="match status" value="1"/>
</dbReference>
<dbReference type="PROSITE" id="PS00145">
    <property type="entry name" value="UREASE_2"/>
    <property type="match status" value="1"/>
</dbReference>
<dbReference type="PROSITE" id="PS51368">
    <property type="entry name" value="UREASE_3"/>
    <property type="match status" value="1"/>
</dbReference>
<organism>
    <name type="scientific">Helicobacter pylori (strain HPAG1)</name>
    <dbReference type="NCBI Taxonomy" id="357544"/>
    <lineage>
        <taxon>Bacteria</taxon>
        <taxon>Pseudomonadati</taxon>
        <taxon>Campylobacterota</taxon>
        <taxon>Epsilonproteobacteria</taxon>
        <taxon>Campylobacterales</taxon>
        <taxon>Helicobacteraceae</taxon>
        <taxon>Helicobacter</taxon>
    </lineage>
</organism>
<comment type="catalytic activity">
    <reaction evidence="1">
        <text>urea + 2 H2O + H(+) = hydrogencarbonate + 2 NH4(+)</text>
        <dbReference type="Rhea" id="RHEA:20557"/>
        <dbReference type="ChEBI" id="CHEBI:15377"/>
        <dbReference type="ChEBI" id="CHEBI:15378"/>
        <dbReference type="ChEBI" id="CHEBI:16199"/>
        <dbReference type="ChEBI" id="CHEBI:17544"/>
        <dbReference type="ChEBI" id="CHEBI:28938"/>
        <dbReference type="EC" id="3.5.1.5"/>
    </reaction>
</comment>
<comment type="cofactor">
    <cofactor evidence="1">
        <name>Ni cation</name>
        <dbReference type="ChEBI" id="CHEBI:25516"/>
    </cofactor>
    <text evidence="1">Binds 2 nickel ions per subunit.</text>
</comment>
<comment type="pathway">
    <text evidence="1">Nitrogen metabolism; urea degradation; CO(2) and NH(3) from urea (urease route): step 1/1.</text>
</comment>
<comment type="subunit">
    <text evidence="1">Heterohexamer of 3 UreA (alpha) and 3 UreB (beta) subunits.</text>
</comment>
<comment type="subcellular location">
    <subcellularLocation>
        <location evidence="1">Cytoplasm</location>
    </subcellularLocation>
</comment>
<comment type="PTM">
    <text evidence="1">Carboxylation allows a single lysine to coordinate two nickel ions.</text>
</comment>
<comment type="similarity">
    <text evidence="1">Belongs to the metallo-dependent hydrolases superfamily. Urease alpha subunit family.</text>
</comment>
<comment type="caution">
    <text evidence="2">The orthologous protein is known as the alpha subunit (UreC) in most other bacteria.</text>
</comment>
<sequence length="569" mass="61669">MKKISRKEYASMYGPTTGDKVRLGDTDLIAEVEHDYTIYGEELKFGGGKTLREGMSQSNNPSKEELDLIITNALIVDYTGIYKADIGIKDGKIAGIGKGGNKDMQDGVKNNLSVGPATEALAGEGLIVTAGGIDTHIHFISPQQIPTAFASGVTTMIGGGTGPADGTNATTITPGRRNLKFMLRAAEEYSMNFGFLAKGNVSNDASLADQIEAGAIGFKIHEDWGTTPSAINHALDVADKYDVQVAIHTDTLNEAGCVEDTMAAIAGRTMHTFHTEGAGGGHAPDIIKVAGEHNILPASTNPTIPFTVNTEAEHMDMLMVCHHLDKSIKEDVQFADSRIRPQTIAAEDTLHDMGIFSITSSDSQAMGRVGEVITRTWQTADKNKKEFGRLKEEKGDNDNFRIKRYLSKYTINPAIAHGISEYVGSVEVGKVADLVLWSPAFFGVKPNMIIKGGFIALSQMGDANASIPTPQPVYYREMFAHHGKAKYDANITFVSQAAYDKGIKEELGLERQVLPVKNCRNITKKDMQFNDTTAHIEVNSETYHVFVDGKEVTSKPANKVSLAQLFSIF</sequence>
<reference key="1">
    <citation type="journal article" date="2006" name="Proc. Natl. Acad. Sci. U.S.A.">
        <title>The complete genome sequence of a chronic atrophic gastritis Helicobacter pylori strain: evolution during disease progression.</title>
        <authorList>
            <person name="Oh J.D."/>
            <person name="Kling-Baeckhed H."/>
            <person name="Giannakis M."/>
            <person name="Xu J."/>
            <person name="Fulton R.S."/>
            <person name="Fulton L.A."/>
            <person name="Cordum H.S."/>
            <person name="Wang C."/>
            <person name="Elliott G."/>
            <person name="Edwards J."/>
            <person name="Mardis E.R."/>
            <person name="Engstrand L.G."/>
            <person name="Gordon J.I."/>
        </authorList>
    </citation>
    <scope>NUCLEOTIDE SEQUENCE [LARGE SCALE GENOMIC DNA]</scope>
    <source>
        <strain>HPAG1</strain>
    </source>
</reference>
<proteinExistence type="inferred from homology"/>
<keyword id="KW-0963">Cytoplasm</keyword>
<keyword id="KW-0378">Hydrolase</keyword>
<keyword id="KW-0479">Metal-binding</keyword>
<keyword id="KW-0533">Nickel</keyword>
<evidence type="ECO:0000255" key="1">
    <source>
        <dbReference type="HAMAP-Rule" id="MF_01953"/>
    </source>
</evidence>
<evidence type="ECO:0000305" key="2"/>
<gene>
    <name evidence="1" type="primary">ureB</name>
    <name type="ordered locus">HPAG1_0073</name>
</gene>
<protein>
    <recommendedName>
        <fullName evidence="1">Urease subunit beta</fullName>
        <ecNumber evidence="1">3.5.1.5</ecNumber>
    </recommendedName>
    <alternativeName>
        <fullName evidence="1">Urea amidohydrolase subunit beta</fullName>
    </alternativeName>
</protein>
<accession>Q1CV82</accession>
<name>URE1_HELPH</name>
<feature type="chain" id="PRO_1000070661" description="Urease subunit beta">
    <location>
        <begin position="1"/>
        <end position="569"/>
    </location>
</feature>
<feature type="domain" description="Urease" evidence="1">
    <location>
        <begin position="131"/>
        <end position="569"/>
    </location>
</feature>
<feature type="active site" description="Proton donor" evidence="1">
    <location>
        <position position="322"/>
    </location>
</feature>
<feature type="binding site" evidence="1">
    <location>
        <position position="136"/>
    </location>
    <ligand>
        <name>Ni(2+)</name>
        <dbReference type="ChEBI" id="CHEBI:49786"/>
        <label>1</label>
    </ligand>
</feature>
<feature type="binding site" evidence="1">
    <location>
        <position position="138"/>
    </location>
    <ligand>
        <name>Ni(2+)</name>
        <dbReference type="ChEBI" id="CHEBI:49786"/>
        <label>1</label>
    </ligand>
</feature>
<feature type="binding site" description="via carbamate group" evidence="1">
    <location>
        <position position="219"/>
    </location>
    <ligand>
        <name>Ni(2+)</name>
        <dbReference type="ChEBI" id="CHEBI:49786"/>
        <label>1</label>
    </ligand>
</feature>
<feature type="binding site" description="via carbamate group" evidence="1">
    <location>
        <position position="219"/>
    </location>
    <ligand>
        <name>Ni(2+)</name>
        <dbReference type="ChEBI" id="CHEBI:49786"/>
        <label>2</label>
    </ligand>
</feature>
<feature type="binding site" evidence="1">
    <location>
        <position position="221"/>
    </location>
    <ligand>
        <name>substrate</name>
    </ligand>
</feature>
<feature type="binding site" evidence="1">
    <location>
        <position position="248"/>
    </location>
    <ligand>
        <name>Ni(2+)</name>
        <dbReference type="ChEBI" id="CHEBI:49786"/>
        <label>2</label>
    </ligand>
</feature>
<feature type="binding site" evidence="1">
    <location>
        <position position="274"/>
    </location>
    <ligand>
        <name>Ni(2+)</name>
        <dbReference type="ChEBI" id="CHEBI:49786"/>
        <label>2</label>
    </ligand>
</feature>
<feature type="binding site" evidence="1">
    <location>
        <position position="362"/>
    </location>
    <ligand>
        <name>Ni(2+)</name>
        <dbReference type="ChEBI" id="CHEBI:49786"/>
        <label>1</label>
    </ligand>
</feature>
<feature type="modified residue" description="N6-carboxylysine" evidence="1">
    <location>
        <position position="219"/>
    </location>
</feature>